<protein>
    <recommendedName>
        <fullName evidence="1">Polyamine aminopropyltransferase</fullName>
    </recommendedName>
    <alternativeName>
        <fullName evidence="1">Putrescine aminopropyltransferase</fullName>
        <shortName evidence="1">PAPT</shortName>
    </alternativeName>
    <alternativeName>
        <fullName evidence="1">Spermidine synthase</fullName>
        <shortName evidence="1">SPDS</shortName>
        <shortName evidence="1">SPDSY</shortName>
        <ecNumber evidence="1">2.5.1.16</ecNumber>
    </alternativeName>
</protein>
<name>SPEE_ECOLC</name>
<reference key="1">
    <citation type="submission" date="2008-02" db="EMBL/GenBank/DDBJ databases">
        <title>Complete sequence of Escherichia coli C str. ATCC 8739.</title>
        <authorList>
            <person name="Copeland A."/>
            <person name="Lucas S."/>
            <person name="Lapidus A."/>
            <person name="Glavina del Rio T."/>
            <person name="Dalin E."/>
            <person name="Tice H."/>
            <person name="Bruce D."/>
            <person name="Goodwin L."/>
            <person name="Pitluck S."/>
            <person name="Kiss H."/>
            <person name="Brettin T."/>
            <person name="Detter J.C."/>
            <person name="Han C."/>
            <person name="Kuske C.R."/>
            <person name="Schmutz J."/>
            <person name="Larimer F."/>
            <person name="Land M."/>
            <person name="Hauser L."/>
            <person name="Kyrpides N."/>
            <person name="Mikhailova N."/>
            <person name="Ingram L."/>
            <person name="Richardson P."/>
        </authorList>
    </citation>
    <scope>NUCLEOTIDE SEQUENCE [LARGE SCALE GENOMIC DNA]</scope>
    <source>
        <strain>ATCC 8739 / DSM 1576 / NBRC 3972 / NCIMB 8545 / WDCM 00012 / Crooks</strain>
    </source>
</reference>
<comment type="function">
    <text evidence="1">Catalyzes the irreversible transfer of a propylamine group from the amino donor S-adenosylmethioninamine (decarboxy-AdoMet) to putrescine (1,4-diaminobutane) to yield spermidine.</text>
</comment>
<comment type="catalytic activity">
    <reaction evidence="1">
        <text>S-adenosyl 3-(methylsulfanyl)propylamine + putrescine = S-methyl-5'-thioadenosine + spermidine + H(+)</text>
        <dbReference type="Rhea" id="RHEA:12721"/>
        <dbReference type="ChEBI" id="CHEBI:15378"/>
        <dbReference type="ChEBI" id="CHEBI:17509"/>
        <dbReference type="ChEBI" id="CHEBI:57443"/>
        <dbReference type="ChEBI" id="CHEBI:57834"/>
        <dbReference type="ChEBI" id="CHEBI:326268"/>
        <dbReference type="EC" id="2.5.1.16"/>
    </reaction>
</comment>
<comment type="pathway">
    <text evidence="1">Amine and polyamine biosynthesis; spermidine biosynthesis; spermidine from putrescine: step 1/1.</text>
</comment>
<comment type="subunit">
    <text evidence="1">Homodimer or homotetramer.</text>
</comment>
<comment type="subcellular location">
    <subcellularLocation>
        <location evidence="1">Cytoplasm</location>
    </subcellularLocation>
</comment>
<comment type="similarity">
    <text evidence="1">Belongs to the spermidine/spermine synthase family.</text>
</comment>
<evidence type="ECO:0000255" key="1">
    <source>
        <dbReference type="HAMAP-Rule" id="MF_00198"/>
    </source>
</evidence>
<proteinExistence type="inferred from homology"/>
<keyword id="KW-0963">Cytoplasm</keyword>
<keyword id="KW-0620">Polyamine biosynthesis</keyword>
<keyword id="KW-0745">Spermidine biosynthesis</keyword>
<keyword id="KW-0808">Transferase</keyword>
<sequence length="288" mass="32321">MAEKKQWHETLHDQFGQYFAVDNVLYHEKTDHQDLIIFENAAFGRVMALDGVVQTTERDEFIYHEMMTHVPLLAHGHAKHVLIIGGGDGAMLREVTRHKNVESITMVEIDAGVVSFCRQYLPNHNAGSYDDPRFKLVIDDGVNFVNQTSQTFDVIISDCTDPIGPGESLFTSAFYEGCKRCLNPGGIFVAQNGVCFLQQEEAIDSHRKLSHYFSDVGFYQAAIPTYYGGIMTFAWATDNDALRHLSTEIIQARFLASGLKCRYYNPAIHTAAFALPQYLQDALASQPS</sequence>
<gene>
    <name evidence="1" type="primary">speE</name>
    <name type="ordered locus">EcolC_3538</name>
</gene>
<dbReference type="EC" id="2.5.1.16" evidence="1"/>
<dbReference type="EMBL" id="CP000946">
    <property type="protein sequence ID" value="ACA79152.1"/>
    <property type="molecule type" value="Genomic_DNA"/>
</dbReference>
<dbReference type="RefSeq" id="WP_000818411.1">
    <property type="nucleotide sequence ID" value="NZ_MTFT01000035.1"/>
</dbReference>
<dbReference type="SMR" id="B1IQL9"/>
<dbReference type="GeneID" id="75202064"/>
<dbReference type="KEGG" id="ecl:EcolC_3538"/>
<dbReference type="HOGENOM" id="CLU_048199_0_0_6"/>
<dbReference type="UniPathway" id="UPA00248">
    <property type="reaction ID" value="UER00314"/>
</dbReference>
<dbReference type="GO" id="GO:0005829">
    <property type="term" value="C:cytosol"/>
    <property type="evidence" value="ECO:0007669"/>
    <property type="project" value="TreeGrafter"/>
</dbReference>
<dbReference type="GO" id="GO:0004766">
    <property type="term" value="F:spermidine synthase activity"/>
    <property type="evidence" value="ECO:0007669"/>
    <property type="project" value="UniProtKB-UniRule"/>
</dbReference>
<dbReference type="GO" id="GO:0008295">
    <property type="term" value="P:spermidine biosynthetic process"/>
    <property type="evidence" value="ECO:0007669"/>
    <property type="project" value="UniProtKB-UniRule"/>
</dbReference>
<dbReference type="CDD" id="cd02440">
    <property type="entry name" value="AdoMet_MTases"/>
    <property type="match status" value="1"/>
</dbReference>
<dbReference type="FunFam" id="2.30.140.10:FF:000002">
    <property type="entry name" value="Polyamine aminopropyltransferase"/>
    <property type="match status" value="1"/>
</dbReference>
<dbReference type="FunFam" id="3.40.50.150:FF:000026">
    <property type="entry name" value="Polyamine aminopropyltransferase"/>
    <property type="match status" value="1"/>
</dbReference>
<dbReference type="Gene3D" id="2.30.140.10">
    <property type="entry name" value="Spermidine synthase, tetramerisation domain"/>
    <property type="match status" value="1"/>
</dbReference>
<dbReference type="Gene3D" id="3.40.50.150">
    <property type="entry name" value="Vaccinia Virus protein VP39"/>
    <property type="match status" value="1"/>
</dbReference>
<dbReference type="HAMAP" id="MF_00198">
    <property type="entry name" value="Spermidine_synth"/>
    <property type="match status" value="1"/>
</dbReference>
<dbReference type="InterPro" id="IPR030374">
    <property type="entry name" value="PABS"/>
</dbReference>
<dbReference type="InterPro" id="IPR030373">
    <property type="entry name" value="PABS_CS"/>
</dbReference>
<dbReference type="InterPro" id="IPR029063">
    <property type="entry name" value="SAM-dependent_MTases_sf"/>
</dbReference>
<dbReference type="InterPro" id="IPR001045">
    <property type="entry name" value="Spermi_synthase"/>
</dbReference>
<dbReference type="InterPro" id="IPR035246">
    <property type="entry name" value="Spermidine_synt_N"/>
</dbReference>
<dbReference type="InterPro" id="IPR037163">
    <property type="entry name" value="Spermidine_synt_N_sf"/>
</dbReference>
<dbReference type="NCBIfam" id="NF037959">
    <property type="entry name" value="MFS_SpdSyn"/>
    <property type="match status" value="1"/>
</dbReference>
<dbReference type="NCBIfam" id="NF002010">
    <property type="entry name" value="PRK00811.1"/>
    <property type="match status" value="1"/>
</dbReference>
<dbReference type="NCBIfam" id="TIGR00417">
    <property type="entry name" value="speE"/>
    <property type="match status" value="1"/>
</dbReference>
<dbReference type="PANTHER" id="PTHR11558:SF11">
    <property type="entry name" value="SPERMIDINE SYNTHASE"/>
    <property type="match status" value="1"/>
</dbReference>
<dbReference type="PANTHER" id="PTHR11558">
    <property type="entry name" value="SPERMIDINE/SPERMINE SYNTHASE"/>
    <property type="match status" value="1"/>
</dbReference>
<dbReference type="Pfam" id="PF17284">
    <property type="entry name" value="Spermine_synt_N"/>
    <property type="match status" value="1"/>
</dbReference>
<dbReference type="Pfam" id="PF01564">
    <property type="entry name" value="Spermine_synth"/>
    <property type="match status" value="1"/>
</dbReference>
<dbReference type="SUPFAM" id="SSF53335">
    <property type="entry name" value="S-adenosyl-L-methionine-dependent methyltransferases"/>
    <property type="match status" value="1"/>
</dbReference>
<dbReference type="PROSITE" id="PS01330">
    <property type="entry name" value="PABS_1"/>
    <property type="match status" value="1"/>
</dbReference>
<dbReference type="PROSITE" id="PS51006">
    <property type="entry name" value="PABS_2"/>
    <property type="match status" value="1"/>
</dbReference>
<organism>
    <name type="scientific">Escherichia coli (strain ATCC 8739 / DSM 1576 / NBRC 3972 / NCIMB 8545 / WDCM 00012 / Crooks)</name>
    <dbReference type="NCBI Taxonomy" id="481805"/>
    <lineage>
        <taxon>Bacteria</taxon>
        <taxon>Pseudomonadati</taxon>
        <taxon>Pseudomonadota</taxon>
        <taxon>Gammaproteobacteria</taxon>
        <taxon>Enterobacterales</taxon>
        <taxon>Enterobacteriaceae</taxon>
        <taxon>Escherichia</taxon>
    </lineage>
</organism>
<feature type="chain" id="PRO_1000077709" description="Polyamine aminopropyltransferase">
    <location>
        <begin position="1"/>
        <end position="288"/>
    </location>
</feature>
<feature type="domain" description="PABS" evidence="1">
    <location>
        <begin position="9"/>
        <end position="238"/>
    </location>
</feature>
<feature type="active site" description="Proton acceptor" evidence="1">
    <location>
        <position position="158"/>
    </location>
</feature>
<feature type="binding site" evidence="1">
    <location>
        <position position="33"/>
    </location>
    <ligand>
        <name>S-methyl-5'-thioadenosine</name>
        <dbReference type="ChEBI" id="CHEBI:17509"/>
    </ligand>
</feature>
<feature type="binding site" evidence="1">
    <location>
        <position position="64"/>
    </location>
    <ligand>
        <name>spermidine</name>
        <dbReference type="ChEBI" id="CHEBI:57834"/>
    </ligand>
</feature>
<feature type="binding site" evidence="1">
    <location>
        <position position="88"/>
    </location>
    <ligand>
        <name>spermidine</name>
        <dbReference type="ChEBI" id="CHEBI:57834"/>
    </ligand>
</feature>
<feature type="binding site" evidence="1">
    <location>
        <position position="108"/>
    </location>
    <ligand>
        <name>S-methyl-5'-thioadenosine</name>
        <dbReference type="ChEBI" id="CHEBI:17509"/>
    </ligand>
</feature>
<feature type="binding site" evidence="1">
    <location>
        <begin position="140"/>
        <end position="141"/>
    </location>
    <ligand>
        <name>S-methyl-5'-thioadenosine</name>
        <dbReference type="ChEBI" id="CHEBI:17509"/>
    </ligand>
</feature>
<feature type="binding site" evidence="1">
    <location>
        <begin position="158"/>
        <end position="161"/>
    </location>
    <ligand>
        <name>spermidine</name>
        <dbReference type="ChEBI" id="CHEBI:57834"/>
    </ligand>
</feature>
<feature type="binding site" evidence="1">
    <location>
        <position position="165"/>
    </location>
    <ligand>
        <name>S-methyl-5'-thioadenosine</name>
        <dbReference type="ChEBI" id="CHEBI:17509"/>
    </ligand>
</feature>
<accession>B1IQL9</accession>